<feature type="chain" id="PRO_0000088593" description="Photosystem I P700 chlorophyll a apoprotein A1">
    <location>
        <begin position="1"/>
        <end position="763"/>
    </location>
</feature>
<feature type="transmembrane region" description="Helical; Name=I" evidence="1">
    <location>
        <begin position="72"/>
        <end position="95"/>
    </location>
</feature>
<feature type="transmembrane region" description="Helical; Name=II" evidence="1">
    <location>
        <begin position="158"/>
        <end position="181"/>
    </location>
</feature>
<feature type="transmembrane region" description="Helical; Name=III" evidence="1">
    <location>
        <begin position="197"/>
        <end position="221"/>
    </location>
</feature>
<feature type="transmembrane region" description="Helical; Name=IV" evidence="1">
    <location>
        <begin position="305"/>
        <end position="323"/>
    </location>
</feature>
<feature type="transmembrane region" description="Helical; Name=V" evidence="1">
    <location>
        <begin position="360"/>
        <end position="383"/>
    </location>
</feature>
<feature type="transmembrane region" description="Helical; Name=VI" evidence="1">
    <location>
        <begin position="399"/>
        <end position="425"/>
    </location>
</feature>
<feature type="transmembrane region" description="Helical; Name=VII" evidence="1">
    <location>
        <begin position="447"/>
        <end position="469"/>
    </location>
</feature>
<feature type="transmembrane region" description="Helical; Name=VIII" evidence="1">
    <location>
        <begin position="544"/>
        <end position="562"/>
    </location>
</feature>
<feature type="transmembrane region" description="Helical; Name=IX" evidence="1">
    <location>
        <begin position="602"/>
        <end position="623"/>
    </location>
</feature>
<feature type="transmembrane region" description="Helical; Name=X" evidence="1">
    <location>
        <begin position="677"/>
        <end position="699"/>
    </location>
</feature>
<feature type="transmembrane region" description="Helical; Name=XI" evidence="1">
    <location>
        <begin position="737"/>
        <end position="757"/>
    </location>
</feature>
<feature type="binding site" evidence="1">
    <location>
        <position position="586"/>
    </location>
    <ligand>
        <name>[4Fe-4S] cluster</name>
        <dbReference type="ChEBI" id="CHEBI:49883"/>
        <note>ligand shared between dimeric partners</note>
    </ligand>
</feature>
<feature type="binding site" evidence="1">
    <location>
        <position position="595"/>
    </location>
    <ligand>
        <name>[4Fe-4S] cluster</name>
        <dbReference type="ChEBI" id="CHEBI:49883"/>
        <note>ligand shared between dimeric partners</note>
    </ligand>
</feature>
<feature type="binding site" description="axial binding residue" evidence="1">
    <location>
        <position position="688"/>
    </location>
    <ligand>
        <name>chlorophyll a'</name>
        <dbReference type="ChEBI" id="CHEBI:189419"/>
        <label>A1</label>
    </ligand>
    <ligandPart>
        <name>Mg</name>
        <dbReference type="ChEBI" id="CHEBI:25107"/>
    </ligandPart>
</feature>
<feature type="binding site" description="axial binding residue" evidence="1">
    <location>
        <position position="696"/>
    </location>
    <ligand>
        <name>chlorophyll a</name>
        <dbReference type="ChEBI" id="CHEBI:58416"/>
        <label>A3</label>
    </ligand>
    <ligandPart>
        <name>Mg</name>
        <dbReference type="ChEBI" id="CHEBI:25107"/>
    </ligandPart>
</feature>
<feature type="binding site" evidence="1">
    <location>
        <position position="704"/>
    </location>
    <ligand>
        <name>chlorophyll a</name>
        <dbReference type="ChEBI" id="CHEBI:58416"/>
        <label>A3</label>
    </ligand>
</feature>
<feature type="binding site" evidence="1">
    <location>
        <position position="705"/>
    </location>
    <ligand>
        <name>phylloquinone</name>
        <dbReference type="ChEBI" id="CHEBI:18067"/>
        <label>A</label>
    </ligand>
</feature>
<dbReference type="EC" id="1.97.1.12" evidence="1"/>
<dbReference type="EMBL" id="AP008231">
    <property type="protein sequence ID" value="BAD80234.1"/>
    <property type="molecule type" value="Genomic_DNA"/>
</dbReference>
<dbReference type="RefSeq" id="WP_011244354.1">
    <property type="nucleotide sequence ID" value="NZ_CP085785.1"/>
</dbReference>
<dbReference type="SMR" id="Q5N0D6"/>
<dbReference type="GeneID" id="72430925"/>
<dbReference type="KEGG" id="syc:syc2044_d"/>
<dbReference type="eggNOG" id="COG2885">
    <property type="taxonomic scope" value="Bacteria"/>
</dbReference>
<dbReference type="Proteomes" id="UP000001175">
    <property type="component" value="Chromosome"/>
</dbReference>
<dbReference type="GO" id="GO:0009522">
    <property type="term" value="C:photosystem I"/>
    <property type="evidence" value="ECO:0007669"/>
    <property type="project" value="UniProtKB-KW"/>
</dbReference>
<dbReference type="GO" id="GO:0031676">
    <property type="term" value="C:plasma membrane-derived thylakoid membrane"/>
    <property type="evidence" value="ECO:0007669"/>
    <property type="project" value="UniProtKB-SubCell"/>
</dbReference>
<dbReference type="GO" id="GO:0051539">
    <property type="term" value="F:4 iron, 4 sulfur cluster binding"/>
    <property type="evidence" value="ECO:0007669"/>
    <property type="project" value="UniProtKB-KW"/>
</dbReference>
<dbReference type="GO" id="GO:0016168">
    <property type="term" value="F:chlorophyll binding"/>
    <property type="evidence" value="ECO:0007669"/>
    <property type="project" value="UniProtKB-KW"/>
</dbReference>
<dbReference type="GO" id="GO:0009055">
    <property type="term" value="F:electron transfer activity"/>
    <property type="evidence" value="ECO:0007669"/>
    <property type="project" value="UniProtKB-UniRule"/>
</dbReference>
<dbReference type="GO" id="GO:0000287">
    <property type="term" value="F:magnesium ion binding"/>
    <property type="evidence" value="ECO:0007669"/>
    <property type="project" value="UniProtKB-UniRule"/>
</dbReference>
<dbReference type="GO" id="GO:0016491">
    <property type="term" value="F:oxidoreductase activity"/>
    <property type="evidence" value="ECO:0007669"/>
    <property type="project" value="UniProtKB-KW"/>
</dbReference>
<dbReference type="GO" id="GO:0015979">
    <property type="term" value="P:photosynthesis"/>
    <property type="evidence" value="ECO:0007669"/>
    <property type="project" value="UniProtKB-UniRule"/>
</dbReference>
<dbReference type="FunFam" id="1.20.1130.10:FF:000001">
    <property type="entry name" value="Photosystem I P700 chlorophyll a apoprotein A2"/>
    <property type="match status" value="1"/>
</dbReference>
<dbReference type="Gene3D" id="1.20.1130.10">
    <property type="entry name" value="Photosystem I PsaA/PsaB"/>
    <property type="match status" value="1"/>
</dbReference>
<dbReference type="HAMAP" id="MF_00458">
    <property type="entry name" value="PSI_PsaA"/>
    <property type="match status" value="1"/>
</dbReference>
<dbReference type="InterPro" id="IPR006243">
    <property type="entry name" value="PSI_PsaA"/>
</dbReference>
<dbReference type="InterPro" id="IPR001280">
    <property type="entry name" value="PSI_PsaA/B"/>
</dbReference>
<dbReference type="InterPro" id="IPR020586">
    <property type="entry name" value="PSI_PsaA/B_CS"/>
</dbReference>
<dbReference type="InterPro" id="IPR036408">
    <property type="entry name" value="PSI_PsaA/B_sf"/>
</dbReference>
<dbReference type="NCBIfam" id="TIGR01335">
    <property type="entry name" value="psaA"/>
    <property type="match status" value="1"/>
</dbReference>
<dbReference type="PANTHER" id="PTHR30128">
    <property type="entry name" value="OUTER MEMBRANE PROTEIN, OMPA-RELATED"/>
    <property type="match status" value="1"/>
</dbReference>
<dbReference type="PANTHER" id="PTHR30128:SF19">
    <property type="entry name" value="PHOTOSYSTEM I P700 CHLOROPHYLL A APOPROTEIN A1-RELATED"/>
    <property type="match status" value="1"/>
</dbReference>
<dbReference type="Pfam" id="PF00223">
    <property type="entry name" value="PsaA_PsaB"/>
    <property type="match status" value="1"/>
</dbReference>
<dbReference type="PIRSF" id="PIRSF002905">
    <property type="entry name" value="PSI_A"/>
    <property type="match status" value="1"/>
</dbReference>
<dbReference type="PRINTS" id="PR00257">
    <property type="entry name" value="PHOTSYSPSAAB"/>
</dbReference>
<dbReference type="SUPFAM" id="SSF81558">
    <property type="entry name" value="Photosystem I subunits PsaA/PsaB"/>
    <property type="match status" value="1"/>
</dbReference>
<dbReference type="PROSITE" id="PS00419">
    <property type="entry name" value="PHOTOSYSTEM_I_PSAAB"/>
    <property type="match status" value="1"/>
</dbReference>
<protein>
    <recommendedName>
        <fullName evidence="1">Photosystem I P700 chlorophyll a apoprotein A1</fullName>
        <ecNumber evidence="1">1.97.1.12</ecNumber>
    </recommendedName>
    <alternativeName>
        <fullName evidence="1">PsaA</fullName>
    </alternativeName>
</protein>
<proteinExistence type="inferred from homology"/>
<gene>
    <name evidence="1" type="primary">psaA</name>
    <name type="ordered locus">syc2044_d</name>
</gene>
<evidence type="ECO:0000255" key="1">
    <source>
        <dbReference type="HAMAP-Rule" id="MF_00458"/>
    </source>
</evidence>
<name>PSAA_SYNP6</name>
<accession>Q5N0D6</accession>
<sequence>MTISPPEREAKVKATVDKNPVPTSFEKWGKPGHFDRTLAKGPKTTTWIWNLHANAHDFDSHTSDLEDISRKIFSAHFGHLAVIFIWLSGAYFHGARFSNFSGWLADPTHVKPSAQVVWPIFGQEILNGDVGGGFHGIQITSGLFQLWRASGYTNEFQLYVTAIGALVMAGLMLFAGWFHYHKAAPKLEWFQNVESMLNHHLAGLLGLGSLSWAGHQIHVSLPVNKLLDAIDAGEPLVLNGKTIASAADIPLPHEFLDVSLISQLFPGFEAGVKAFFTLNWSAYADFLTFKGGLNPVTGGLWLTDTAHHHLAIAVLFIVAGHMYRTNWGIGHSLKEILEAHKGPFTGQGHKGLYEILTTSWHAQLSINLAILGSISIIVAHHMYAMPPYPYLATDYPTMLSLFTHHIWIGGFLIVGAGAHAAIFMVRDYDPAKNVDNLLDRVLRHRDAIISHLNWVCIWLGFHSFGLYIHNDTMRALGRPQDMFSDSAIQLQPIFAQWIQNIHALAPGNTAPNALASVSQVFGGDVVAVGGKVAAAPIVLGTADFMVHHIHAFTIHVTALILLKGVLYARSSRLVPDKANLGFRFPCDGPGRGGTCQVSGWDHVFLGLFWMYNSLSIVIFHYSWKMQSDVWGSVLPDGSVAHIANGNFAQSALTINGWLRDFLWAQASQVITSYGSSTSAYGLLFLGAHFVWAFSLMFLFSGRGYWQELIESIVWAHNKLKVAPAIQPRALSIIQGRAVGVAHYLLGGIVTTWSFFLARIIAVG</sequence>
<organism>
    <name type="scientific">Synechococcus sp. (strain ATCC 27144 / PCC 6301 / SAUG 1402/1)</name>
    <name type="common">Anacystis nidulans</name>
    <dbReference type="NCBI Taxonomy" id="269084"/>
    <lineage>
        <taxon>Bacteria</taxon>
        <taxon>Bacillati</taxon>
        <taxon>Cyanobacteriota</taxon>
        <taxon>Cyanophyceae</taxon>
        <taxon>Synechococcales</taxon>
        <taxon>Synechococcaceae</taxon>
        <taxon>Synechococcus</taxon>
    </lineage>
</organism>
<comment type="function">
    <text evidence="1">PsaA and PsaB bind P700, the primary electron donor of photosystem I (PSI), as well as the electron acceptors A0, A1 and FX. PSI is a plastocyanin/cytochrome c6-ferredoxin oxidoreductase, converting photonic excitation into a charge separation, which transfers an electron from the donor P700 chlorophyll pair to the spectroscopically characterized acceptors A0, A1, FX, FA and FB in turn. Oxidized P700 is reduced on the lumenal side of the thylakoid membrane by plastocyanin or cytochrome c6.</text>
</comment>
<comment type="catalytic activity">
    <reaction evidence="1">
        <text>reduced [plastocyanin] + hnu + oxidized [2Fe-2S]-[ferredoxin] = oxidized [plastocyanin] + reduced [2Fe-2S]-[ferredoxin]</text>
        <dbReference type="Rhea" id="RHEA:30407"/>
        <dbReference type="Rhea" id="RHEA-COMP:10000"/>
        <dbReference type="Rhea" id="RHEA-COMP:10001"/>
        <dbReference type="Rhea" id="RHEA-COMP:10039"/>
        <dbReference type="Rhea" id="RHEA-COMP:10040"/>
        <dbReference type="ChEBI" id="CHEBI:29036"/>
        <dbReference type="ChEBI" id="CHEBI:30212"/>
        <dbReference type="ChEBI" id="CHEBI:33737"/>
        <dbReference type="ChEBI" id="CHEBI:33738"/>
        <dbReference type="ChEBI" id="CHEBI:49552"/>
        <dbReference type="EC" id="1.97.1.12"/>
    </reaction>
</comment>
<comment type="cofactor">
    <text evidence="1">PSI electron transfer chain: 5 chlorophyll a, 1 chlorophyll a', 2 phylloquinones and 3 4Fe-4S clusters. PSI core antenna: 90 chlorophyll a, 22 carotenoids, 3 phospholipids and 1 galactolipid. P700 is a chlorophyll a/chlorophyll a' dimer, A0 is one or more chlorophyll a, A1 is one or both phylloquinones and FX is a shared 4Fe-4S iron-sulfur center.</text>
</comment>
<comment type="subunit">
    <text evidence="1">The PsaA/B heterodimer binds the P700 chlorophyll special pair and subsequent electron acceptors. PSI consists of a core antenna complex that captures photons, and an electron transfer chain that converts photonic excitation into a charge separation. The cyanobacterial PSI reaction center is composed of one copy each of PsaA,B,C,D,E,F,I,J,K,L,M and X, and forms trimeric complexes.</text>
</comment>
<comment type="subcellular location">
    <subcellularLocation>
        <location evidence="1">Cellular thylakoid membrane</location>
        <topology evidence="1">Multi-pass membrane protein</topology>
    </subcellularLocation>
</comment>
<comment type="similarity">
    <text evidence="1">Belongs to the PsaA/PsaB family.</text>
</comment>
<reference key="1">
    <citation type="journal article" date="2007" name="Photosyn. Res.">
        <title>Complete nucleotide sequence of the freshwater unicellular cyanobacterium Synechococcus elongatus PCC 6301 chromosome: gene content and organization.</title>
        <authorList>
            <person name="Sugita C."/>
            <person name="Ogata K."/>
            <person name="Shikata M."/>
            <person name="Jikuya H."/>
            <person name="Takano J."/>
            <person name="Furumichi M."/>
            <person name="Kanehisa M."/>
            <person name="Omata T."/>
            <person name="Sugiura M."/>
            <person name="Sugita M."/>
        </authorList>
    </citation>
    <scope>NUCLEOTIDE SEQUENCE [LARGE SCALE GENOMIC DNA]</scope>
    <source>
        <strain>ATCC 27144 / PCC 6301 / SAUG 1402/1</strain>
    </source>
</reference>
<keyword id="KW-0004">4Fe-4S</keyword>
<keyword id="KW-0148">Chlorophyll</keyword>
<keyword id="KW-0157">Chromophore</keyword>
<keyword id="KW-0249">Electron transport</keyword>
<keyword id="KW-0408">Iron</keyword>
<keyword id="KW-0411">Iron-sulfur</keyword>
<keyword id="KW-0460">Magnesium</keyword>
<keyword id="KW-0472">Membrane</keyword>
<keyword id="KW-0479">Metal-binding</keyword>
<keyword id="KW-0560">Oxidoreductase</keyword>
<keyword id="KW-0602">Photosynthesis</keyword>
<keyword id="KW-0603">Photosystem I</keyword>
<keyword id="KW-0793">Thylakoid</keyword>
<keyword id="KW-0812">Transmembrane</keyword>
<keyword id="KW-1133">Transmembrane helix</keyword>
<keyword id="KW-0813">Transport</keyword>